<protein>
    <recommendedName>
        <fullName evidence="1">NADH-quinone oxidoreductase subunit I</fullName>
        <ecNumber evidence="1">7.1.1.-</ecNumber>
    </recommendedName>
    <alternativeName>
        <fullName evidence="1">NADH dehydrogenase I subunit I</fullName>
    </alternativeName>
    <alternativeName>
        <fullName evidence="1">NDH-1 subunit I</fullName>
    </alternativeName>
</protein>
<name>NUOI_CAMFF</name>
<gene>
    <name evidence="1" type="primary">nuoI</name>
    <name type="ordered locus">CFF8240_0164</name>
</gene>
<keyword id="KW-0004">4Fe-4S</keyword>
<keyword id="KW-0997">Cell inner membrane</keyword>
<keyword id="KW-1003">Cell membrane</keyword>
<keyword id="KW-0408">Iron</keyword>
<keyword id="KW-0411">Iron-sulfur</keyword>
<keyword id="KW-0472">Membrane</keyword>
<keyword id="KW-0479">Metal-binding</keyword>
<keyword id="KW-0520">NAD</keyword>
<keyword id="KW-0874">Quinone</keyword>
<keyword id="KW-0677">Repeat</keyword>
<keyword id="KW-1278">Translocase</keyword>
<keyword id="KW-0830">Ubiquinone</keyword>
<dbReference type="EC" id="7.1.1.-" evidence="1"/>
<dbReference type="EMBL" id="CP000487">
    <property type="protein sequence ID" value="ABK82826.1"/>
    <property type="molecule type" value="Genomic_DNA"/>
</dbReference>
<dbReference type="RefSeq" id="WP_010402338.1">
    <property type="nucleotide sequence ID" value="NC_008599.1"/>
</dbReference>
<dbReference type="SMR" id="A0RMD6"/>
<dbReference type="KEGG" id="cff:CFF8240_0164"/>
<dbReference type="eggNOG" id="COG1143">
    <property type="taxonomic scope" value="Bacteria"/>
</dbReference>
<dbReference type="HOGENOM" id="CLU_067218_4_3_7"/>
<dbReference type="Proteomes" id="UP000000760">
    <property type="component" value="Chromosome"/>
</dbReference>
<dbReference type="GO" id="GO:0005886">
    <property type="term" value="C:plasma membrane"/>
    <property type="evidence" value="ECO:0007669"/>
    <property type="project" value="UniProtKB-SubCell"/>
</dbReference>
<dbReference type="GO" id="GO:0051539">
    <property type="term" value="F:4 iron, 4 sulfur cluster binding"/>
    <property type="evidence" value="ECO:0007669"/>
    <property type="project" value="UniProtKB-KW"/>
</dbReference>
<dbReference type="GO" id="GO:0005506">
    <property type="term" value="F:iron ion binding"/>
    <property type="evidence" value="ECO:0007669"/>
    <property type="project" value="UniProtKB-UniRule"/>
</dbReference>
<dbReference type="GO" id="GO:0050136">
    <property type="term" value="F:NADH:ubiquinone reductase (non-electrogenic) activity"/>
    <property type="evidence" value="ECO:0007669"/>
    <property type="project" value="UniProtKB-UniRule"/>
</dbReference>
<dbReference type="GO" id="GO:0048038">
    <property type="term" value="F:quinone binding"/>
    <property type="evidence" value="ECO:0007669"/>
    <property type="project" value="UniProtKB-KW"/>
</dbReference>
<dbReference type="Gene3D" id="3.30.70.3270">
    <property type="match status" value="1"/>
</dbReference>
<dbReference type="HAMAP" id="MF_01351">
    <property type="entry name" value="NDH1_NuoI"/>
    <property type="match status" value="1"/>
</dbReference>
<dbReference type="InterPro" id="IPR017896">
    <property type="entry name" value="4Fe4S_Fe-S-bd"/>
</dbReference>
<dbReference type="InterPro" id="IPR017900">
    <property type="entry name" value="4Fe4S_Fe_S_CS"/>
</dbReference>
<dbReference type="InterPro" id="IPR010226">
    <property type="entry name" value="NADH_quinone_OxRdtase_chainI"/>
</dbReference>
<dbReference type="PANTHER" id="PTHR10849">
    <property type="entry name" value="NADH DEHYDROGENASE UBIQUINONE IRON-SULFUR PROTEIN 8, MITOCHONDRIAL"/>
    <property type="match status" value="1"/>
</dbReference>
<dbReference type="PANTHER" id="PTHR10849:SF24">
    <property type="entry name" value="NADH-QUINONE OXIDOREDUCTASE SUBUNIT I 2"/>
    <property type="match status" value="1"/>
</dbReference>
<dbReference type="Pfam" id="PF12838">
    <property type="entry name" value="Fer4_7"/>
    <property type="match status" value="1"/>
</dbReference>
<dbReference type="SUPFAM" id="SSF54862">
    <property type="entry name" value="4Fe-4S ferredoxins"/>
    <property type="match status" value="1"/>
</dbReference>
<dbReference type="PROSITE" id="PS00198">
    <property type="entry name" value="4FE4S_FER_1"/>
    <property type="match status" value="2"/>
</dbReference>
<dbReference type="PROSITE" id="PS51379">
    <property type="entry name" value="4FE4S_FER_2"/>
    <property type="match status" value="2"/>
</dbReference>
<feature type="chain" id="PRO_0000298488" description="NADH-quinone oxidoreductase subunit I">
    <location>
        <begin position="1"/>
        <end position="165"/>
    </location>
</feature>
<feature type="domain" description="4Fe-4S ferredoxin-type 1" evidence="1">
    <location>
        <begin position="66"/>
        <end position="98"/>
    </location>
</feature>
<feature type="domain" description="4Fe-4S ferredoxin-type 2" evidence="1">
    <location>
        <begin position="109"/>
        <end position="138"/>
    </location>
</feature>
<feature type="binding site" evidence="1">
    <location>
        <position position="78"/>
    </location>
    <ligand>
        <name>[4Fe-4S] cluster</name>
        <dbReference type="ChEBI" id="CHEBI:49883"/>
        <label>1</label>
    </ligand>
</feature>
<feature type="binding site" evidence="1">
    <location>
        <position position="81"/>
    </location>
    <ligand>
        <name>[4Fe-4S] cluster</name>
        <dbReference type="ChEBI" id="CHEBI:49883"/>
        <label>1</label>
    </ligand>
</feature>
<feature type="binding site" evidence="1">
    <location>
        <position position="84"/>
    </location>
    <ligand>
        <name>[4Fe-4S] cluster</name>
        <dbReference type="ChEBI" id="CHEBI:49883"/>
        <label>1</label>
    </ligand>
</feature>
<feature type="binding site" evidence="1">
    <location>
        <position position="88"/>
    </location>
    <ligand>
        <name>[4Fe-4S] cluster</name>
        <dbReference type="ChEBI" id="CHEBI:49883"/>
        <label>2</label>
    </ligand>
</feature>
<feature type="binding site" evidence="1">
    <location>
        <position position="118"/>
    </location>
    <ligand>
        <name>[4Fe-4S] cluster</name>
        <dbReference type="ChEBI" id="CHEBI:49883"/>
        <label>2</label>
    </ligand>
</feature>
<feature type="binding site" evidence="1">
    <location>
        <position position="121"/>
    </location>
    <ligand>
        <name>[4Fe-4S] cluster</name>
        <dbReference type="ChEBI" id="CHEBI:49883"/>
        <label>2</label>
    </ligand>
</feature>
<feature type="binding site" evidence="1">
    <location>
        <position position="124"/>
    </location>
    <ligand>
        <name>[4Fe-4S] cluster</name>
        <dbReference type="ChEBI" id="CHEBI:49883"/>
        <label>2</label>
    </ligand>
</feature>
<feature type="binding site" evidence="1">
    <location>
        <position position="128"/>
    </location>
    <ligand>
        <name>[4Fe-4S] cluster</name>
        <dbReference type="ChEBI" id="CHEBI:49883"/>
        <label>1</label>
    </ligand>
</feature>
<evidence type="ECO:0000255" key="1">
    <source>
        <dbReference type="HAMAP-Rule" id="MF_01351"/>
    </source>
</evidence>
<comment type="function">
    <text evidence="1">NDH-1 shuttles electrons from NADH, via FMN and iron-sulfur (Fe-S) centers, to quinones in the respiratory chain. The immediate electron acceptor for the enzyme in this species is believed to be ubiquinone. Couples the redox reaction to proton translocation (for every two electrons transferred, four hydrogen ions are translocated across the cytoplasmic membrane), and thus conserves the redox energy in a proton gradient.</text>
</comment>
<comment type="catalytic activity">
    <reaction evidence="1">
        <text>a quinone + NADH + 5 H(+)(in) = a quinol + NAD(+) + 4 H(+)(out)</text>
        <dbReference type="Rhea" id="RHEA:57888"/>
        <dbReference type="ChEBI" id="CHEBI:15378"/>
        <dbReference type="ChEBI" id="CHEBI:24646"/>
        <dbReference type="ChEBI" id="CHEBI:57540"/>
        <dbReference type="ChEBI" id="CHEBI:57945"/>
        <dbReference type="ChEBI" id="CHEBI:132124"/>
    </reaction>
</comment>
<comment type="cofactor">
    <cofactor evidence="1">
        <name>[4Fe-4S] cluster</name>
        <dbReference type="ChEBI" id="CHEBI:49883"/>
    </cofactor>
    <text evidence="1">Binds 2 [4Fe-4S] clusters per subunit.</text>
</comment>
<comment type="subunit">
    <text evidence="1">NDH-1 is composed of 14 different subunits. Subunits NuoA, H, J, K, L, M, N constitute the membrane sector of the complex.</text>
</comment>
<comment type="subcellular location">
    <subcellularLocation>
        <location evidence="1">Cell inner membrane</location>
        <topology evidence="1">Peripheral membrane protein</topology>
    </subcellularLocation>
</comment>
<comment type="similarity">
    <text evidence="1">Belongs to the complex I 23 kDa subunit family.</text>
</comment>
<accession>A0RMD6</accession>
<proteinExistence type="inferred from homology"/>
<reference key="1">
    <citation type="submission" date="2006-11" db="EMBL/GenBank/DDBJ databases">
        <title>Sequence of Campylobacter fetus subsp. fetus 82-40.</title>
        <authorList>
            <person name="Fouts D.E."/>
            <person name="Nelson K.E."/>
        </authorList>
    </citation>
    <scope>NUCLEOTIDE SEQUENCE [LARGE SCALE GENOMIC DNA]</scope>
    <source>
        <strain>82-40</strain>
    </source>
</reference>
<sequence length="165" mass="18823">MAIKTKTIRRKKIPFLQRIYLPFIFAGMARTFRHFFRNLKDSSNIDFLEYPEQKPTDITNRYRGLHRLTKNEKGDLKCVACDMCATACPANCIFITATEIEGSKEKAPSKFTIDLLECVFCGLCVEACPKDAIRMDTGIFTKVGNTRESFLADIKTLSQREEGSF</sequence>
<organism>
    <name type="scientific">Campylobacter fetus subsp. fetus (strain 82-40)</name>
    <dbReference type="NCBI Taxonomy" id="360106"/>
    <lineage>
        <taxon>Bacteria</taxon>
        <taxon>Pseudomonadati</taxon>
        <taxon>Campylobacterota</taxon>
        <taxon>Epsilonproteobacteria</taxon>
        <taxon>Campylobacterales</taxon>
        <taxon>Campylobacteraceae</taxon>
        <taxon>Campylobacter</taxon>
    </lineage>
</organism>